<dbReference type="EC" id="2.1.1.-"/>
<dbReference type="EMBL" id="AK014501">
    <property type="protein sequence ID" value="BAB29400.1"/>
    <property type="molecule type" value="mRNA"/>
</dbReference>
<dbReference type="EMBL" id="CH466523">
    <property type="protein sequence ID" value="EDK98780.1"/>
    <property type="molecule type" value="Genomic_DNA"/>
</dbReference>
<dbReference type="EMBL" id="BC138901">
    <property type="protein sequence ID" value="AAI38902.1"/>
    <property type="molecule type" value="mRNA"/>
</dbReference>
<dbReference type="EMBL" id="BC138902">
    <property type="protein sequence ID" value="AAI38903.1"/>
    <property type="molecule type" value="mRNA"/>
</dbReference>
<dbReference type="CCDS" id="CCDS20208.1"/>
<dbReference type="RefSeq" id="NP_081823.2">
    <property type="nucleotide sequence ID" value="NM_027547.2"/>
</dbReference>
<dbReference type="SMR" id="Q9CXE0"/>
<dbReference type="BioGRID" id="214249">
    <property type="interactions" value="31"/>
</dbReference>
<dbReference type="FunCoup" id="Q9CXE0">
    <property type="interactions" value="1894"/>
</dbReference>
<dbReference type="IntAct" id="Q9CXE0">
    <property type="interactions" value="1"/>
</dbReference>
<dbReference type="STRING" id="10090.ENSMUSP00000031976"/>
<dbReference type="PhosphoSitePlus" id="Q9CXE0"/>
<dbReference type="PaxDb" id="10090-ENSMUSP00000031976"/>
<dbReference type="ProteomicsDB" id="291557"/>
<dbReference type="Pumba" id="Q9CXE0"/>
<dbReference type="Antibodypedia" id="26690">
    <property type="antibodies" value="244 antibodies from 29 providers"/>
</dbReference>
<dbReference type="DNASU" id="70779"/>
<dbReference type="Ensembl" id="ENSMUST00000031976.14">
    <property type="protein sequence ID" value="ENSMUSP00000031976.8"/>
    <property type="gene ID" value="ENSMUSG00000029913.15"/>
</dbReference>
<dbReference type="GeneID" id="70779"/>
<dbReference type="KEGG" id="mmu:70779"/>
<dbReference type="UCSC" id="uc009cek.1">
    <property type="organism name" value="mouse"/>
</dbReference>
<dbReference type="AGR" id="MGI:1918029"/>
<dbReference type="CTD" id="11107"/>
<dbReference type="MGI" id="MGI:1918029">
    <property type="gene designation" value="Prdm5"/>
</dbReference>
<dbReference type="VEuPathDB" id="HostDB:ENSMUSG00000029913"/>
<dbReference type="eggNOG" id="KOG1721">
    <property type="taxonomic scope" value="Eukaryota"/>
</dbReference>
<dbReference type="eggNOG" id="KOG2461">
    <property type="taxonomic scope" value="Eukaryota"/>
</dbReference>
<dbReference type="GeneTree" id="ENSGT00940000158340"/>
<dbReference type="HOGENOM" id="CLU_002678_75_0_1"/>
<dbReference type="InParanoid" id="Q9CXE0"/>
<dbReference type="OMA" id="YKNHKKX"/>
<dbReference type="OrthoDB" id="6077919at2759"/>
<dbReference type="PhylomeDB" id="Q9CXE0"/>
<dbReference type="TreeFam" id="TF106478"/>
<dbReference type="BioGRID-ORCS" id="70779">
    <property type="hits" value="3 hits in 82 CRISPR screens"/>
</dbReference>
<dbReference type="ChiTaRS" id="Prdm5">
    <property type="organism name" value="mouse"/>
</dbReference>
<dbReference type="PRO" id="PR:Q9CXE0"/>
<dbReference type="Proteomes" id="UP000000589">
    <property type="component" value="Chromosome 6"/>
</dbReference>
<dbReference type="RNAct" id="Q9CXE0">
    <property type="molecule type" value="protein"/>
</dbReference>
<dbReference type="Bgee" id="ENSMUSG00000029913">
    <property type="expression patterns" value="Expressed in humerus cartilage element and 206 other cell types or tissues"/>
</dbReference>
<dbReference type="ExpressionAtlas" id="Q9CXE0">
    <property type="expression patterns" value="baseline and differential"/>
</dbReference>
<dbReference type="GO" id="GO:0016604">
    <property type="term" value="C:nuclear body"/>
    <property type="evidence" value="ECO:0007669"/>
    <property type="project" value="Ensembl"/>
</dbReference>
<dbReference type="GO" id="GO:0005730">
    <property type="term" value="C:nucleolus"/>
    <property type="evidence" value="ECO:0007669"/>
    <property type="project" value="Ensembl"/>
</dbReference>
<dbReference type="GO" id="GO:0005634">
    <property type="term" value="C:nucleus"/>
    <property type="evidence" value="ECO:0000250"/>
    <property type="project" value="UniProtKB"/>
</dbReference>
<dbReference type="GO" id="GO:0140297">
    <property type="term" value="F:DNA-binding transcription factor binding"/>
    <property type="evidence" value="ECO:0000250"/>
    <property type="project" value="UniProtKB"/>
</dbReference>
<dbReference type="GO" id="GO:0001227">
    <property type="term" value="F:DNA-binding transcription repressor activity, RNA polymerase II-specific"/>
    <property type="evidence" value="ECO:0007669"/>
    <property type="project" value="Ensembl"/>
</dbReference>
<dbReference type="GO" id="GO:0008168">
    <property type="term" value="F:methyltransferase activity"/>
    <property type="evidence" value="ECO:0007669"/>
    <property type="project" value="UniProtKB-KW"/>
</dbReference>
<dbReference type="GO" id="GO:0000978">
    <property type="term" value="F:RNA polymerase II cis-regulatory region sequence-specific DNA binding"/>
    <property type="evidence" value="ECO:0007669"/>
    <property type="project" value="Ensembl"/>
</dbReference>
<dbReference type="GO" id="GO:0043565">
    <property type="term" value="F:sequence-specific DNA binding"/>
    <property type="evidence" value="ECO:0000250"/>
    <property type="project" value="UniProtKB"/>
</dbReference>
<dbReference type="GO" id="GO:0000976">
    <property type="term" value="F:transcription cis-regulatory region binding"/>
    <property type="evidence" value="ECO:0000250"/>
    <property type="project" value="UniProtKB"/>
</dbReference>
<dbReference type="GO" id="GO:0008270">
    <property type="term" value="F:zinc ion binding"/>
    <property type="evidence" value="ECO:0007669"/>
    <property type="project" value="UniProtKB-KW"/>
</dbReference>
<dbReference type="GO" id="GO:1990830">
    <property type="term" value="P:cellular response to leukemia inhibitory factor"/>
    <property type="evidence" value="ECO:0000270"/>
    <property type="project" value="MGI"/>
</dbReference>
<dbReference type="GO" id="GO:0006325">
    <property type="term" value="P:chromatin organization"/>
    <property type="evidence" value="ECO:0007669"/>
    <property type="project" value="UniProtKB-KW"/>
</dbReference>
<dbReference type="GO" id="GO:0032259">
    <property type="term" value="P:methylation"/>
    <property type="evidence" value="ECO:0007669"/>
    <property type="project" value="UniProtKB-KW"/>
</dbReference>
<dbReference type="GO" id="GO:0000278">
    <property type="term" value="P:mitotic cell cycle"/>
    <property type="evidence" value="ECO:0000250"/>
    <property type="project" value="UniProtKB"/>
</dbReference>
<dbReference type="GO" id="GO:0045892">
    <property type="term" value="P:negative regulation of DNA-templated transcription"/>
    <property type="evidence" value="ECO:0000250"/>
    <property type="project" value="UniProtKB"/>
</dbReference>
<dbReference type="GO" id="GO:0045944">
    <property type="term" value="P:positive regulation of transcription by RNA polymerase II"/>
    <property type="evidence" value="ECO:0007669"/>
    <property type="project" value="Ensembl"/>
</dbReference>
<dbReference type="GO" id="GO:1903053">
    <property type="term" value="P:regulation of extracellular matrix organization"/>
    <property type="evidence" value="ECO:0007669"/>
    <property type="project" value="Ensembl"/>
</dbReference>
<dbReference type="CDD" id="cd19190">
    <property type="entry name" value="PR-SET_PRDM5"/>
    <property type="match status" value="1"/>
</dbReference>
<dbReference type="FunFam" id="3.30.160.60:FF:000100">
    <property type="entry name" value="Zinc finger 45-like"/>
    <property type="match status" value="1"/>
</dbReference>
<dbReference type="FunFam" id="2.170.270.10:FF:000015">
    <property type="entry name" value="Zinc finger protein"/>
    <property type="match status" value="1"/>
</dbReference>
<dbReference type="FunFam" id="3.30.160.60:FF:000407">
    <property type="entry name" value="Zinc finger protein"/>
    <property type="match status" value="1"/>
</dbReference>
<dbReference type="FunFam" id="3.30.160.60:FF:000476">
    <property type="entry name" value="Zinc finger protein"/>
    <property type="match status" value="1"/>
</dbReference>
<dbReference type="FunFam" id="3.30.160.60:FF:000510">
    <property type="entry name" value="Zinc finger protein"/>
    <property type="match status" value="1"/>
</dbReference>
<dbReference type="FunFam" id="3.30.160.60:FF:000518">
    <property type="entry name" value="Zinc finger protein"/>
    <property type="match status" value="1"/>
</dbReference>
<dbReference type="FunFam" id="3.30.160.60:FF:000527">
    <property type="entry name" value="Zinc finger protein"/>
    <property type="match status" value="1"/>
</dbReference>
<dbReference type="FunFam" id="3.30.160.60:FF:000533">
    <property type="entry name" value="Zinc finger protein"/>
    <property type="match status" value="1"/>
</dbReference>
<dbReference type="FunFam" id="3.30.160.60:FF:000636">
    <property type="entry name" value="Zinc finger protein"/>
    <property type="match status" value="1"/>
</dbReference>
<dbReference type="FunFam" id="3.30.160.60:FF:000659">
    <property type="entry name" value="Zinc finger protein"/>
    <property type="match status" value="1"/>
</dbReference>
<dbReference type="FunFam" id="3.30.160.60:FF:000880">
    <property type="entry name" value="Zinc finger protein"/>
    <property type="match status" value="1"/>
</dbReference>
<dbReference type="FunFam" id="3.30.160.60:FF:002716">
    <property type="entry name" value="Zinc finger protein 212"/>
    <property type="match status" value="1"/>
</dbReference>
<dbReference type="FunFam" id="3.30.160.60:FF:000546">
    <property type="entry name" value="Zinc finger protein 333"/>
    <property type="match status" value="1"/>
</dbReference>
<dbReference type="Gene3D" id="3.30.160.60">
    <property type="entry name" value="Classic Zinc Finger"/>
    <property type="match status" value="14"/>
</dbReference>
<dbReference type="Gene3D" id="2.170.270.10">
    <property type="entry name" value="SET domain"/>
    <property type="match status" value="1"/>
</dbReference>
<dbReference type="InterPro" id="IPR044415">
    <property type="entry name" value="PRDM5_PR-SET"/>
</dbReference>
<dbReference type="InterPro" id="IPR001214">
    <property type="entry name" value="SET_dom"/>
</dbReference>
<dbReference type="InterPro" id="IPR046341">
    <property type="entry name" value="SET_dom_sf"/>
</dbReference>
<dbReference type="InterPro" id="IPR050331">
    <property type="entry name" value="Zinc_finger"/>
</dbReference>
<dbReference type="InterPro" id="IPR036236">
    <property type="entry name" value="Znf_C2H2_sf"/>
</dbReference>
<dbReference type="InterPro" id="IPR013087">
    <property type="entry name" value="Znf_C2H2_type"/>
</dbReference>
<dbReference type="InterPro" id="IPR017125">
    <property type="entry name" value="Znf_PRDM5-like"/>
</dbReference>
<dbReference type="PANTHER" id="PTHR16515">
    <property type="entry name" value="PR DOMAIN ZINC FINGER PROTEIN"/>
    <property type="match status" value="1"/>
</dbReference>
<dbReference type="PANTHER" id="PTHR16515:SF32">
    <property type="entry name" value="PR DOMAIN ZINC FINGER PROTEIN 5"/>
    <property type="match status" value="1"/>
</dbReference>
<dbReference type="Pfam" id="PF21549">
    <property type="entry name" value="PRDM2_PR"/>
    <property type="match status" value="1"/>
</dbReference>
<dbReference type="Pfam" id="PF00096">
    <property type="entry name" value="zf-C2H2"/>
    <property type="match status" value="9"/>
</dbReference>
<dbReference type="Pfam" id="PF13912">
    <property type="entry name" value="zf-C2H2_6"/>
    <property type="match status" value="3"/>
</dbReference>
<dbReference type="Pfam" id="PF12874">
    <property type="entry name" value="zf-met"/>
    <property type="match status" value="2"/>
</dbReference>
<dbReference type="PIRSF" id="PIRSF037162">
    <property type="entry name" value="PRDM"/>
    <property type="match status" value="1"/>
</dbReference>
<dbReference type="SMART" id="SM00317">
    <property type="entry name" value="SET"/>
    <property type="match status" value="1"/>
</dbReference>
<dbReference type="SMART" id="SM00355">
    <property type="entry name" value="ZnF_C2H2"/>
    <property type="match status" value="15"/>
</dbReference>
<dbReference type="SUPFAM" id="SSF57667">
    <property type="entry name" value="beta-beta-alpha zinc fingers"/>
    <property type="match status" value="8"/>
</dbReference>
<dbReference type="SUPFAM" id="SSF82199">
    <property type="entry name" value="SET domain"/>
    <property type="match status" value="1"/>
</dbReference>
<dbReference type="PROSITE" id="PS50280">
    <property type="entry name" value="SET"/>
    <property type="match status" value="1"/>
</dbReference>
<dbReference type="PROSITE" id="PS00028">
    <property type="entry name" value="ZINC_FINGER_C2H2_1"/>
    <property type="match status" value="15"/>
</dbReference>
<dbReference type="PROSITE" id="PS50157">
    <property type="entry name" value="ZINC_FINGER_C2H2_2"/>
    <property type="match status" value="15"/>
</dbReference>
<evidence type="ECO:0000250" key="1"/>
<evidence type="ECO:0000255" key="2">
    <source>
        <dbReference type="PROSITE-ProRule" id="PRU00042"/>
    </source>
</evidence>
<evidence type="ECO:0000255" key="3">
    <source>
        <dbReference type="PROSITE-ProRule" id="PRU00190"/>
    </source>
</evidence>
<evidence type="ECO:0000305" key="4"/>
<feature type="chain" id="PRO_0000230794" description="PR domain zinc finger protein 5">
    <location>
        <begin position="1"/>
        <end position="599"/>
    </location>
</feature>
<feature type="domain" description="SET" evidence="3">
    <location>
        <begin position="8"/>
        <end position="124"/>
    </location>
</feature>
<feature type="zinc finger region" description="C2H2-type 1" evidence="2">
    <location>
        <begin position="167"/>
        <end position="190"/>
    </location>
</feature>
<feature type="zinc finger region" description="C2H2-type 2" evidence="2">
    <location>
        <begin position="199"/>
        <end position="221"/>
    </location>
</feature>
<feature type="zinc finger region" description="C2H2-type 3" evidence="2">
    <location>
        <begin position="231"/>
        <end position="256"/>
    </location>
</feature>
<feature type="zinc finger region" description="C2H2-type 4" evidence="2">
    <location>
        <begin position="264"/>
        <end position="286"/>
    </location>
</feature>
<feature type="zinc finger region" description="C2H2-type 5" evidence="2">
    <location>
        <begin position="289"/>
        <end position="311"/>
    </location>
</feature>
<feature type="zinc finger region" description="C2H2-type 6" evidence="2">
    <location>
        <begin position="317"/>
        <end position="339"/>
    </location>
</feature>
<feature type="zinc finger region" description="C2H2-type 7" evidence="2">
    <location>
        <begin position="345"/>
        <end position="367"/>
    </location>
</feature>
<feature type="zinc finger region" description="C2H2-type 8" evidence="2">
    <location>
        <begin position="373"/>
        <end position="395"/>
    </location>
</feature>
<feature type="zinc finger region" description="C2H2-type 9" evidence="2">
    <location>
        <begin position="401"/>
        <end position="424"/>
    </location>
</feature>
<feature type="zinc finger region" description="C2H2-type 10" evidence="2">
    <location>
        <begin position="430"/>
        <end position="452"/>
    </location>
</feature>
<feature type="zinc finger region" description="C2H2-type 11" evidence="2">
    <location>
        <begin position="458"/>
        <end position="480"/>
    </location>
</feature>
<feature type="zinc finger region" description="C2H2-type 12" evidence="2">
    <location>
        <begin position="486"/>
        <end position="508"/>
    </location>
</feature>
<feature type="zinc finger region" description="C2H2-type 13; degenerate" evidence="2">
    <location>
        <begin position="514"/>
        <end position="536"/>
    </location>
</feature>
<feature type="zinc finger region" description="C2H2-type 14" evidence="2">
    <location>
        <begin position="542"/>
        <end position="564"/>
    </location>
</feature>
<feature type="zinc finger region" description="C2H2-type 15" evidence="2">
    <location>
        <begin position="571"/>
        <end position="594"/>
    </location>
</feature>
<feature type="sequence conflict" description="In Ref. 1; BAB29400." evidence="4" ref="1">
    <original>EH</original>
    <variation>AT</variation>
    <location>
        <begin position="531"/>
        <end position="532"/>
    </location>
</feature>
<keyword id="KW-0010">Activator</keyword>
<keyword id="KW-0156">Chromatin regulator</keyword>
<keyword id="KW-0238">DNA-binding</keyword>
<keyword id="KW-0479">Metal-binding</keyword>
<keyword id="KW-0489">Methyltransferase</keyword>
<keyword id="KW-0539">Nucleus</keyword>
<keyword id="KW-1185">Reference proteome</keyword>
<keyword id="KW-0677">Repeat</keyword>
<keyword id="KW-0678">Repressor</keyword>
<keyword id="KW-0949">S-adenosyl-L-methionine</keyword>
<keyword id="KW-0804">Transcription</keyword>
<keyword id="KW-0805">Transcription regulation</keyword>
<keyword id="KW-0808">Transferase</keyword>
<keyword id="KW-0862">Zinc</keyword>
<keyword id="KW-0863">Zinc-finger</keyword>
<protein>
    <recommendedName>
        <fullName>PR domain zinc finger protein 5</fullName>
        <ecNumber>2.1.1.-</ecNumber>
    </recommendedName>
    <alternativeName>
        <fullName>PR domain-containing protein 5</fullName>
    </alternativeName>
</protein>
<proteinExistence type="evidence at transcript level"/>
<accession>Q9CXE0</accession>
<accession>B2RSK8</accession>
<organism>
    <name type="scientific">Mus musculus</name>
    <name type="common">Mouse</name>
    <dbReference type="NCBI Taxonomy" id="10090"/>
    <lineage>
        <taxon>Eukaryota</taxon>
        <taxon>Metazoa</taxon>
        <taxon>Chordata</taxon>
        <taxon>Craniata</taxon>
        <taxon>Vertebrata</taxon>
        <taxon>Euteleostomi</taxon>
        <taxon>Mammalia</taxon>
        <taxon>Eutheria</taxon>
        <taxon>Euarchontoglires</taxon>
        <taxon>Glires</taxon>
        <taxon>Rodentia</taxon>
        <taxon>Myomorpha</taxon>
        <taxon>Muroidea</taxon>
        <taxon>Muridae</taxon>
        <taxon>Murinae</taxon>
        <taxon>Mus</taxon>
        <taxon>Mus</taxon>
    </lineage>
</organism>
<reference key="1">
    <citation type="journal article" date="2005" name="Science">
        <title>The transcriptional landscape of the mammalian genome.</title>
        <authorList>
            <person name="Carninci P."/>
            <person name="Kasukawa T."/>
            <person name="Katayama S."/>
            <person name="Gough J."/>
            <person name="Frith M.C."/>
            <person name="Maeda N."/>
            <person name="Oyama R."/>
            <person name="Ravasi T."/>
            <person name="Lenhard B."/>
            <person name="Wells C."/>
            <person name="Kodzius R."/>
            <person name="Shimokawa K."/>
            <person name="Bajic V.B."/>
            <person name="Brenner S.E."/>
            <person name="Batalov S."/>
            <person name="Forrest A.R."/>
            <person name="Zavolan M."/>
            <person name="Davis M.J."/>
            <person name="Wilming L.G."/>
            <person name="Aidinis V."/>
            <person name="Allen J.E."/>
            <person name="Ambesi-Impiombato A."/>
            <person name="Apweiler R."/>
            <person name="Aturaliya R.N."/>
            <person name="Bailey T.L."/>
            <person name="Bansal M."/>
            <person name="Baxter L."/>
            <person name="Beisel K.W."/>
            <person name="Bersano T."/>
            <person name="Bono H."/>
            <person name="Chalk A.M."/>
            <person name="Chiu K.P."/>
            <person name="Choudhary V."/>
            <person name="Christoffels A."/>
            <person name="Clutterbuck D.R."/>
            <person name="Crowe M.L."/>
            <person name="Dalla E."/>
            <person name="Dalrymple B.P."/>
            <person name="de Bono B."/>
            <person name="Della Gatta G."/>
            <person name="di Bernardo D."/>
            <person name="Down T."/>
            <person name="Engstrom P."/>
            <person name="Fagiolini M."/>
            <person name="Faulkner G."/>
            <person name="Fletcher C.F."/>
            <person name="Fukushima T."/>
            <person name="Furuno M."/>
            <person name="Futaki S."/>
            <person name="Gariboldi M."/>
            <person name="Georgii-Hemming P."/>
            <person name="Gingeras T.R."/>
            <person name="Gojobori T."/>
            <person name="Green R.E."/>
            <person name="Gustincich S."/>
            <person name="Harbers M."/>
            <person name="Hayashi Y."/>
            <person name="Hensch T.K."/>
            <person name="Hirokawa N."/>
            <person name="Hill D."/>
            <person name="Huminiecki L."/>
            <person name="Iacono M."/>
            <person name="Ikeo K."/>
            <person name="Iwama A."/>
            <person name="Ishikawa T."/>
            <person name="Jakt M."/>
            <person name="Kanapin A."/>
            <person name="Katoh M."/>
            <person name="Kawasawa Y."/>
            <person name="Kelso J."/>
            <person name="Kitamura H."/>
            <person name="Kitano H."/>
            <person name="Kollias G."/>
            <person name="Krishnan S.P."/>
            <person name="Kruger A."/>
            <person name="Kummerfeld S.K."/>
            <person name="Kurochkin I.V."/>
            <person name="Lareau L.F."/>
            <person name="Lazarevic D."/>
            <person name="Lipovich L."/>
            <person name="Liu J."/>
            <person name="Liuni S."/>
            <person name="McWilliam S."/>
            <person name="Madan Babu M."/>
            <person name="Madera M."/>
            <person name="Marchionni L."/>
            <person name="Matsuda H."/>
            <person name="Matsuzawa S."/>
            <person name="Miki H."/>
            <person name="Mignone F."/>
            <person name="Miyake S."/>
            <person name="Morris K."/>
            <person name="Mottagui-Tabar S."/>
            <person name="Mulder N."/>
            <person name="Nakano N."/>
            <person name="Nakauchi H."/>
            <person name="Ng P."/>
            <person name="Nilsson R."/>
            <person name="Nishiguchi S."/>
            <person name="Nishikawa S."/>
            <person name="Nori F."/>
            <person name="Ohara O."/>
            <person name="Okazaki Y."/>
            <person name="Orlando V."/>
            <person name="Pang K.C."/>
            <person name="Pavan W.J."/>
            <person name="Pavesi G."/>
            <person name="Pesole G."/>
            <person name="Petrovsky N."/>
            <person name="Piazza S."/>
            <person name="Reed J."/>
            <person name="Reid J.F."/>
            <person name="Ring B.Z."/>
            <person name="Ringwald M."/>
            <person name="Rost B."/>
            <person name="Ruan Y."/>
            <person name="Salzberg S.L."/>
            <person name="Sandelin A."/>
            <person name="Schneider C."/>
            <person name="Schoenbach C."/>
            <person name="Sekiguchi K."/>
            <person name="Semple C.A."/>
            <person name="Seno S."/>
            <person name="Sessa L."/>
            <person name="Sheng Y."/>
            <person name="Shibata Y."/>
            <person name="Shimada H."/>
            <person name="Shimada K."/>
            <person name="Silva D."/>
            <person name="Sinclair B."/>
            <person name="Sperling S."/>
            <person name="Stupka E."/>
            <person name="Sugiura K."/>
            <person name="Sultana R."/>
            <person name="Takenaka Y."/>
            <person name="Taki K."/>
            <person name="Tammoja K."/>
            <person name="Tan S.L."/>
            <person name="Tang S."/>
            <person name="Taylor M.S."/>
            <person name="Tegner J."/>
            <person name="Teichmann S.A."/>
            <person name="Ueda H.R."/>
            <person name="van Nimwegen E."/>
            <person name="Verardo R."/>
            <person name="Wei C.L."/>
            <person name="Yagi K."/>
            <person name="Yamanishi H."/>
            <person name="Zabarovsky E."/>
            <person name="Zhu S."/>
            <person name="Zimmer A."/>
            <person name="Hide W."/>
            <person name="Bult C."/>
            <person name="Grimmond S.M."/>
            <person name="Teasdale R.D."/>
            <person name="Liu E.T."/>
            <person name="Brusic V."/>
            <person name="Quackenbush J."/>
            <person name="Wahlestedt C."/>
            <person name="Mattick J.S."/>
            <person name="Hume D.A."/>
            <person name="Kai C."/>
            <person name="Sasaki D."/>
            <person name="Tomaru Y."/>
            <person name="Fukuda S."/>
            <person name="Kanamori-Katayama M."/>
            <person name="Suzuki M."/>
            <person name="Aoki J."/>
            <person name="Arakawa T."/>
            <person name="Iida J."/>
            <person name="Imamura K."/>
            <person name="Itoh M."/>
            <person name="Kato T."/>
            <person name="Kawaji H."/>
            <person name="Kawagashira N."/>
            <person name="Kawashima T."/>
            <person name="Kojima M."/>
            <person name="Kondo S."/>
            <person name="Konno H."/>
            <person name="Nakano K."/>
            <person name="Ninomiya N."/>
            <person name="Nishio T."/>
            <person name="Okada M."/>
            <person name="Plessy C."/>
            <person name="Shibata K."/>
            <person name="Shiraki T."/>
            <person name="Suzuki S."/>
            <person name="Tagami M."/>
            <person name="Waki K."/>
            <person name="Watahiki A."/>
            <person name="Okamura-Oho Y."/>
            <person name="Suzuki H."/>
            <person name="Kawai J."/>
            <person name="Hayashizaki Y."/>
        </authorList>
    </citation>
    <scope>NUCLEOTIDE SEQUENCE [LARGE SCALE MRNA]</scope>
    <source>
        <strain>C57BL/6J</strain>
        <tissue>Liver</tissue>
    </source>
</reference>
<reference key="2">
    <citation type="submission" date="2005-07" db="EMBL/GenBank/DDBJ databases">
        <authorList>
            <person name="Mural R.J."/>
            <person name="Adams M.D."/>
            <person name="Myers E.W."/>
            <person name="Smith H.O."/>
            <person name="Venter J.C."/>
        </authorList>
    </citation>
    <scope>NUCLEOTIDE SEQUENCE [LARGE SCALE GENOMIC DNA]</scope>
</reference>
<reference key="3">
    <citation type="journal article" date="2004" name="Genome Res.">
        <title>The status, quality, and expansion of the NIH full-length cDNA project: the Mammalian Gene Collection (MGC).</title>
        <authorList>
            <consortium name="The MGC Project Team"/>
        </authorList>
    </citation>
    <scope>NUCLEOTIDE SEQUENCE [LARGE SCALE MRNA]</scope>
    <source>
        <tissue>Brain</tissue>
    </source>
</reference>
<gene>
    <name type="primary">Prdm5</name>
</gene>
<comment type="function">
    <text evidence="1">Sequence-specific DNA-binding transcription factor. Represses transcription at least in part by recruitment of the histone methyltransferase EHMT2/G9A and histone deacetylases such as HDAC1. Regulates hematopoiesis-associated protein-coding and microRNA (miRNA) genes (By similarity). May regulate the expression of proteins involved in extracellular matrix development and maintenance, connective tissue components and molecules regulating cell migration and adhesion. May cause G2/M arrest and apoptosis in cancer cells (By similarity).</text>
</comment>
<comment type="subunit">
    <text evidence="1">Interacts with EHMT2/G9A, GFI1 and HDAC1.</text>
</comment>
<comment type="subcellular location">
    <subcellularLocation>
        <location evidence="1">Nucleus</location>
    </subcellularLocation>
</comment>
<comment type="similarity">
    <text evidence="3">Belongs to the class V-like SAM-binding methyltransferase superfamily.</text>
</comment>
<sequence>MLGMYVPDRFALKSSRVQDGMGLYTARRVRKGEKFGPFAGEKRMPEDLDENMDYRLMWEVRGSKGEVLYILDATNPRHSNWLRFVHEAPSQERKNLAAIQEGENIFYLAVDDIETDTELLIGYLDSDVEAEEEEQQALTMTKEGKVDHSKGQLAAGSKGHLGCEEDFACPQCESSFPSEEVLTEHLQSLHQKPTGEKEFKCENCGKKFPVRQALQRHFEQHRKACRGEARFVCKADSCGKRLKSKDALRRHQENVHTGDPKRKLICSVCNRKCTSVSSLQEHRKIHEIFDCQECMKKFISANQLKRHMITHSEKRPYNCEICNKSFKRLDQVGAHKVIHSEDKPYQCKLCGKGFAHRNVYKNHKKTHSEERPFQCDACKALFRTPFSLQRHLLIHNSERTFKCHHCDATFKRKDTLNVHVQVVHERHKKYRCELCNKAFVTPSVLRSHKKTHTGEKEKVCPYCGQKFASSGTLRVHIRSHTGERPYQCPYCEKGFSKNDGLKMHIRTHTREKPYQCSECSKAFSQKRGLDEHKRTHTGEKPFQCDVCDLAFSLKKMLIRHKMTHNPNRPMAECHFCHKKFTRNDYLKVHMDNIHGVADS</sequence>
<name>PRDM5_MOUSE</name>